<keyword id="KW-0067">ATP-binding</keyword>
<keyword id="KW-0342">GTP-binding</keyword>
<keyword id="KW-0547">Nucleotide-binding</keyword>
<keyword id="KW-0548">Nucleotidyltransferase</keyword>
<keyword id="KW-0808">Transferase</keyword>
<sequence>MADKLDIKAFLDKDEQKDLLRLLTAGSVDDGKSTLIGRLLFDSKKLYEDQLDALERDSKRLGNAGEHIDYALLLDGLKAEREQGITIDVAYRYFSTNNRKFIIADTPGHEQYTRNMITGGSTANLAIILVDARMGVITQTRRHTFLVSLLGIKHVVLAVNKMDLVDFSEERFNEIVAEYKKFVAPLGIPDVTCIPLSALDGDNVVDKSERTPWYEGLSLLDFLETVHIDSDNNFSDFRFPVQYVLRPNLDFRGFCGKVASGIIRKGDKVMALPSGKVSHVKSIVTFDGELDYAFPPQSVTLTLEDEIDVSRGEMLVHPDNLPIVDRNFEAMLVWMDEEPMDINKSFFIKQTTNVSRTRIDSIKYKVDVNTMEHSSVPFLSLNEIARVVFTTAKELFFDPYRKNKSCGSFILIDPITNNTSAVGMIIDRVEKKDMNIADDFPVLNLPELGIAPEHYEAIEKAVKSLSEQGFEVRIEK</sequence>
<dbReference type="EC" id="2.7.7.4" evidence="2"/>
<dbReference type="EMBL" id="AP006841">
    <property type="protein sequence ID" value="BAD48417.1"/>
    <property type="molecule type" value="Genomic_DNA"/>
</dbReference>
<dbReference type="RefSeq" id="WP_005786535.1">
    <property type="nucleotide sequence ID" value="NC_006347.1"/>
</dbReference>
<dbReference type="RefSeq" id="YP_098951.1">
    <property type="nucleotide sequence ID" value="NC_006347.1"/>
</dbReference>
<dbReference type="SMR" id="Q64VQ9"/>
<dbReference type="STRING" id="295405.BF1669"/>
<dbReference type="KEGG" id="bfr:BF1669"/>
<dbReference type="PATRIC" id="fig|295405.11.peg.1621"/>
<dbReference type="HOGENOM" id="CLU_007265_5_2_10"/>
<dbReference type="OrthoDB" id="9804504at2"/>
<dbReference type="UniPathway" id="UPA00140">
    <property type="reaction ID" value="UER00204"/>
</dbReference>
<dbReference type="Proteomes" id="UP000002197">
    <property type="component" value="Chromosome"/>
</dbReference>
<dbReference type="GO" id="GO:0005524">
    <property type="term" value="F:ATP binding"/>
    <property type="evidence" value="ECO:0007669"/>
    <property type="project" value="UniProtKB-KW"/>
</dbReference>
<dbReference type="GO" id="GO:0005525">
    <property type="term" value="F:GTP binding"/>
    <property type="evidence" value="ECO:0007669"/>
    <property type="project" value="UniProtKB-UniRule"/>
</dbReference>
<dbReference type="GO" id="GO:0003924">
    <property type="term" value="F:GTPase activity"/>
    <property type="evidence" value="ECO:0007669"/>
    <property type="project" value="InterPro"/>
</dbReference>
<dbReference type="GO" id="GO:0004781">
    <property type="term" value="F:sulfate adenylyltransferase (ATP) activity"/>
    <property type="evidence" value="ECO:0007669"/>
    <property type="project" value="UniProtKB-UniRule"/>
</dbReference>
<dbReference type="GO" id="GO:0070814">
    <property type="term" value="P:hydrogen sulfide biosynthetic process"/>
    <property type="evidence" value="ECO:0007669"/>
    <property type="project" value="UniProtKB-UniRule"/>
</dbReference>
<dbReference type="GO" id="GO:0000103">
    <property type="term" value="P:sulfate assimilation"/>
    <property type="evidence" value="ECO:0007669"/>
    <property type="project" value="UniProtKB-UniRule"/>
</dbReference>
<dbReference type="CDD" id="cd04166">
    <property type="entry name" value="CysN_ATPS"/>
    <property type="match status" value="1"/>
</dbReference>
<dbReference type="CDD" id="cd03695">
    <property type="entry name" value="CysN_NodQ_II"/>
    <property type="match status" value="1"/>
</dbReference>
<dbReference type="CDD" id="cd04095">
    <property type="entry name" value="CysN_NoDQ_III"/>
    <property type="match status" value="1"/>
</dbReference>
<dbReference type="FunFam" id="2.40.30.10:FF:000027">
    <property type="entry name" value="Sulfate adenylyltransferase subunit 1"/>
    <property type="match status" value="1"/>
</dbReference>
<dbReference type="FunFam" id="3.40.50.300:FF:000119">
    <property type="entry name" value="Sulfate adenylyltransferase subunit 1"/>
    <property type="match status" value="1"/>
</dbReference>
<dbReference type="Gene3D" id="3.40.50.300">
    <property type="entry name" value="P-loop containing nucleotide triphosphate hydrolases"/>
    <property type="match status" value="1"/>
</dbReference>
<dbReference type="Gene3D" id="2.40.30.10">
    <property type="entry name" value="Translation factors"/>
    <property type="match status" value="2"/>
</dbReference>
<dbReference type="HAMAP" id="MF_00062">
    <property type="entry name" value="Sulf_adenylyltr_sub1"/>
    <property type="match status" value="1"/>
</dbReference>
<dbReference type="InterPro" id="IPR041757">
    <property type="entry name" value="CysN_GTP-bd"/>
</dbReference>
<dbReference type="InterPro" id="IPR044138">
    <property type="entry name" value="CysN_II"/>
</dbReference>
<dbReference type="InterPro" id="IPR044139">
    <property type="entry name" value="CysN_NoDQ_III"/>
</dbReference>
<dbReference type="InterPro" id="IPR031157">
    <property type="entry name" value="G_TR_CS"/>
</dbReference>
<dbReference type="InterPro" id="IPR054696">
    <property type="entry name" value="GTP-eEF1A_C"/>
</dbReference>
<dbReference type="InterPro" id="IPR027417">
    <property type="entry name" value="P-loop_NTPase"/>
</dbReference>
<dbReference type="InterPro" id="IPR011779">
    <property type="entry name" value="SO4_adenylTrfase_lsu"/>
</dbReference>
<dbReference type="InterPro" id="IPR000795">
    <property type="entry name" value="T_Tr_GTP-bd_dom"/>
</dbReference>
<dbReference type="InterPro" id="IPR050100">
    <property type="entry name" value="TRAFAC_GTPase_members"/>
</dbReference>
<dbReference type="InterPro" id="IPR009000">
    <property type="entry name" value="Transl_B-barrel_sf"/>
</dbReference>
<dbReference type="InterPro" id="IPR009001">
    <property type="entry name" value="Transl_elong_EF1A/Init_IF2_C"/>
</dbReference>
<dbReference type="NCBIfam" id="TIGR02034">
    <property type="entry name" value="CysN"/>
    <property type="match status" value="1"/>
</dbReference>
<dbReference type="NCBIfam" id="NF003478">
    <property type="entry name" value="PRK05124.1"/>
    <property type="match status" value="1"/>
</dbReference>
<dbReference type="PANTHER" id="PTHR23115">
    <property type="entry name" value="TRANSLATION FACTOR"/>
    <property type="match status" value="1"/>
</dbReference>
<dbReference type="Pfam" id="PF22594">
    <property type="entry name" value="GTP-eEF1A_C"/>
    <property type="match status" value="1"/>
</dbReference>
<dbReference type="Pfam" id="PF00009">
    <property type="entry name" value="GTP_EFTU"/>
    <property type="match status" value="1"/>
</dbReference>
<dbReference type="PRINTS" id="PR00315">
    <property type="entry name" value="ELONGATNFCT"/>
</dbReference>
<dbReference type="SUPFAM" id="SSF50465">
    <property type="entry name" value="EF-Tu/eEF-1alpha/eIF2-gamma C-terminal domain"/>
    <property type="match status" value="1"/>
</dbReference>
<dbReference type="SUPFAM" id="SSF52540">
    <property type="entry name" value="P-loop containing nucleoside triphosphate hydrolases"/>
    <property type="match status" value="1"/>
</dbReference>
<dbReference type="SUPFAM" id="SSF50447">
    <property type="entry name" value="Translation proteins"/>
    <property type="match status" value="1"/>
</dbReference>
<dbReference type="PROSITE" id="PS00301">
    <property type="entry name" value="G_TR_1"/>
    <property type="match status" value="1"/>
</dbReference>
<dbReference type="PROSITE" id="PS51722">
    <property type="entry name" value="G_TR_2"/>
    <property type="match status" value="1"/>
</dbReference>
<accession>Q64VQ9</accession>
<protein>
    <recommendedName>
        <fullName evidence="2">Sulfate adenylyltransferase subunit 1</fullName>
        <ecNumber evidence="2">2.7.7.4</ecNumber>
    </recommendedName>
    <alternativeName>
        <fullName evidence="2">ATP-sulfurylase large subunit</fullName>
    </alternativeName>
    <alternativeName>
        <fullName evidence="2">Sulfate adenylate transferase</fullName>
        <shortName evidence="2">SAT</shortName>
    </alternativeName>
</protein>
<proteinExistence type="inferred from homology"/>
<comment type="function">
    <text evidence="2">With CysD forms the ATP sulfurylase (ATPS) that catalyzes the adenylation of sulfate producing adenosine 5'-phosphosulfate (APS) and diphosphate, the first enzymatic step in sulfur assimilation pathway. APS synthesis involves the formation of a high-energy phosphoric-sulfuric acid anhydride bond driven by GTP hydrolysis by CysN coupled to ATP hydrolysis by CysD.</text>
</comment>
<comment type="catalytic activity">
    <reaction evidence="2">
        <text>sulfate + ATP + H(+) = adenosine 5'-phosphosulfate + diphosphate</text>
        <dbReference type="Rhea" id="RHEA:18133"/>
        <dbReference type="ChEBI" id="CHEBI:15378"/>
        <dbReference type="ChEBI" id="CHEBI:16189"/>
        <dbReference type="ChEBI" id="CHEBI:30616"/>
        <dbReference type="ChEBI" id="CHEBI:33019"/>
        <dbReference type="ChEBI" id="CHEBI:58243"/>
        <dbReference type="EC" id="2.7.7.4"/>
    </reaction>
</comment>
<comment type="pathway">
    <text evidence="2">Sulfur metabolism; hydrogen sulfide biosynthesis; sulfite from sulfate: step 1/3.</text>
</comment>
<comment type="subunit">
    <text evidence="2">Heterodimer composed of CysD, the smaller subunit, and CysN.</text>
</comment>
<comment type="similarity">
    <text evidence="2">Belongs to the TRAFAC class translation factor GTPase superfamily. Classic translation factor GTPase family. CysN/NodQ subfamily.</text>
</comment>
<name>CYSN_BACFR</name>
<evidence type="ECO:0000250" key="1"/>
<evidence type="ECO:0000255" key="2">
    <source>
        <dbReference type="HAMAP-Rule" id="MF_00062"/>
    </source>
</evidence>
<organism>
    <name type="scientific">Bacteroides fragilis (strain YCH46)</name>
    <dbReference type="NCBI Taxonomy" id="295405"/>
    <lineage>
        <taxon>Bacteria</taxon>
        <taxon>Pseudomonadati</taxon>
        <taxon>Bacteroidota</taxon>
        <taxon>Bacteroidia</taxon>
        <taxon>Bacteroidales</taxon>
        <taxon>Bacteroidaceae</taxon>
        <taxon>Bacteroides</taxon>
    </lineage>
</organism>
<gene>
    <name evidence="2" type="primary">cysN</name>
    <name type="ordered locus">BF1669</name>
</gene>
<feature type="chain" id="PRO_1000092134" description="Sulfate adenylyltransferase subunit 1">
    <location>
        <begin position="1"/>
        <end position="476"/>
    </location>
</feature>
<feature type="domain" description="tr-type G">
    <location>
        <begin position="17"/>
        <end position="232"/>
    </location>
</feature>
<feature type="region of interest" description="G1" evidence="1">
    <location>
        <begin position="26"/>
        <end position="33"/>
    </location>
</feature>
<feature type="region of interest" description="G2" evidence="1">
    <location>
        <begin position="84"/>
        <end position="88"/>
    </location>
</feature>
<feature type="region of interest" description="G3" evidence="1">
    <location>
        <begin position="105"/>
        <end position="108"/>
    </location>
</feature>
<feature type="region of interest" description="G4" evidence="1">
    <location>
        <begin position="160"/>
        <end position="163"/>
    </location>
</feature>
<feature type="region of interest" description="G5" evidence="1">
    <location>
        <begin position="197"/>
        <end position="199"/>
    </location>
</feature>
<feature type="binding site" evidence="2">
    <location>
        <begin position="26"/>
        <end position="33"/>
    </location>
    <ligand>
        <name>GTP</name>
        <dbReference type="ChEBI" id="CHEBI:37565"/>
    </ligand>
</feature>
<feature type="binding site" evidence="2">
    <location>
        <begin position="105"/>
        <end position="109"/>
    </location>
    <ligand>
        <name>GTP</name>
        <dbReference type="ChEBI" id="CHEBI:37565"/>
    </ligand>
</feature>
<feature type="binding site" evidence="2">
    <location>
        <begin position="160"/>
        <end position="163"/>
    </location>
    <ligand>
        <name>GTP</name>
        <dbReference type="ChEBI" id="CHEBI:37565"/>
    </ligand>
</feature>
<reference key="1">
    <citation type="journal article" date="2004" name="Proc. Natl. Acad. Sci. U.S.A.">
        <title>Genomic analysis of Bacteroides fragilis reveals extensive DNA inversions regulating cell surface adaptation.</title>
        <authorList>
            <person name="Kuwahara T."/>
            <person name="Yamashita A."/>
            <person name="Hirakawa H."/>
            <person name="Nakayama H."/>
            <person name="Toh H."/>
            <person name="Okada N."/>
            <person name="Kuhara S."/>
            <person name="Hattori M."/>
            <person name="Hayashi T."/>
            <person name="Ohnishi Y."/>
        </authorList>
    </citation>
    <scope>NUCLEOTIDE SEQUENCE [LARGE SCALE GENOMIC DNA]</scope>
    <source>
        <strain>YCH46</strain>
    </source>
</reference>